<gene>
    <name evidence="37 39" type="primary">ARF6</name>
</gene>
<dbReference type="EC" id="3.6.5.2" evidence="31"/>
<dbReference type="EMBL" id="M57763">
    <property type="protein sequence ID" value="AAA90928.1"/>
    <property type="molecule type" value="mRNA"/>
</dbReference>
<dbReference type="EMBL" id="AY296206">
    <property type="protein sequence ID" value="AAP50257.1"/>
    <property type="molecule type" value="Genomic_DNA"/>
</dbReference>
<dbReference type="EMBL" id="AF047432">
    <property type="protein sequence ID" value="AAC39877.1"/>
    <property type="molecule type" value="mRNA"/>
</dbReference>
<dbReference type="EMBL" id="AF493885">
    <property type="protein sequence ID" value="AAM12599.1"/>
    <property type="molecule type" value="mRNA"/>
</dbReference>
<dbReference type="EMBL" id="AK313790">
    <property type="protein sequence ID" value="BAG36527.1"/>
    <property type="molecule type" value="mRNA"/>
</dbReference>
<dbReference type="EMBL" id="CR541964">
    <property type="protein sequence ID" value="CAG46762.1"/>
    <property type="molecule type" value="mRNA"/>
</dbReference>
<dbReference type="EMBL" id="CH471078">
    <property type="protein sequence ID" value="EAW65740.1"/>
    <property type="molecule type" value="Genomic_DNA"/>
</dbReference>
<dbReference type="EMBL" id="BC002952">
    <property type="status" value="NOT_ANNOTATED_CDS"/>
    <property type="molecule type" value="mRNA"/>
</dbReference>
<dbReference type="EMBL" id="BC008918">
    <property type="protein sequence ID" value="AAH08918.1"/>
    <property type="molecule type" value="mRNA"/>
</dbReference>
<dbReference type="CCDS" id="CCDS9695.1"/>
<dbReference type="PIR" id="B23741">
    <property type="entry name" value="B23741"/>
</dbReference>
<dbReference type="RefSeq" id="NP_001654.1">
    <property type="nucleotide sequence ID" value="NM_001663.4"/>
</dbReference>
<dbReference type="PDB" id="1E0S">
    <property type="method" value="X-ray"/>
    <property type="resolution" value="2.28 A"/>
    <property type="chains" value="A=2-175"/>
</dbReference>
<dbReference type="PDB" id="2A5D">
    <property type="method" value="X-ray"/>
    <property type="resolution" value="1.80 A"/>
    <property type="chains" value="A=1-175"/>
</dbReference>
<dbReference type="PDB" id="2A5F">
    <property type="method" value="X-ray"/>
    <property type="resolution" value="2.02 A"/>
    <property type="chains" value="A=1-175"/>
</dbReference>
<dbReference type="PDB" id="2A5G">
    <property type="method" value="X-ray"/>
    <property type="resolution" value="2.66 A"/>
    <property type="chains" value="A=1-175"/>
</dbReference>
<dbReference type="PDB" id="2BAO">
    <property type="method" value="NMR"/>
    <property type="chains" value="A=2-11"/>
</dbReference>
<dbReference type="PDB" id="2BAU">
    <property type="method" value="NMR"/>
    <property type="chains" value="A=2-11"/>
</dbReference>
<dbReference type="PDB" id="2J5X">
    <property type="method" value="X-ray"/>
    <property type="resolution" value="2.80 A"/>
    <property type="chains" value="A/B=2-175"/>
</dbReference>
<dbReference type="PDB" id="2W83">
    <property type="method" value="X-ray"/>
    <property type="resolution" value="1.93 A"/>
    <property type="chains" value="A/B/E=13-175"/>
</dbReference>
<dbReference type="PDB" id="3LVQ">
    <property type="method" value="X-ray"/>
    <property type="resolution" value="3.38 A"/>
    <property type="chains" value="E=11-175"/>
</dbReference>
<dbReference type="PDB" id="3LVR">
    <property type="method" value="X-ray"/>
    <property type="resolution" value="3.38 A"/>
    <property type="chains" value="E=11-175"/>
</dbReference>
<dbReference type="PDB" id="3N5C">
    <property type="method" value="X-ray"/>
    <property type="resolution" value="1.82 A"/>
    <property type="chains" value="A/B=14-175"/>
</dbReference>
<dbReference type="PDB" id="3PCR">
    <property type="method" value="X-ray"/>
    <property type="resolution" value="2.50 A"/>
    <property type="chains" value="B=14-175"/>
</dbReference>
<dbReference type="PDB" id="4FME">
    <property type="method" value="X-ray"/>
    <property type="resolution" value="4.10 A"/>
    <property type="chains" value="C/F=14-173"/>
</dbReference>
<dbReference type="PDB" id="4KAX">
    <property type="method" value="X-ray"/>
    <property type="resolution" value="1.85 A"/>
    <property type="chains" value="A=14-173"/>
</dbReference>
<dbReference type="PDB" id="6BBP">
    <property type="method" value="EM"/>
    <property type="resolution" value="35.00 A"/>
    <property type="chains" value="A=2-173"/>
</dbReference>
<dbReference type="PDB" id="6BBQ">
    <property type="method" value="EM"/>
    <property type="resolution" value="35.00 A"/>
    <property type="chains" value="A=2-173"/>
</dbReference>
<dbReference type="PDB" id="6PAU">
    <property type="method" value="X-ray"/>
    <property type="resolution" value="1.93 A"/>
    <property type="chains" value="C=3-9"/>
</dbReference>
<dbReference type="PDB" id="7RK3">
    <property type="method" value="X-ray"/>
    <property type="resolution" value="2.05 A"/>
    <property type="chains" value="B=2-9"/>
</dbReference>
<dbReference type="PDB" id="7XRD">
    <property type="method" value="EM"/>
    <property type="resolution" value="3.90 A"/>
    <property type="chains" value="A/B/C/D=2-175"/>
</dbReference>
<dbReference type="PDBsum" id="1E0S"/>
<dbReference type="PDBsum" id="2A5D"/>
<dbReference type="PDBsum" id="2A5F"/>
<dbReference type="PDBsum" id="2A5G"/>
<dbReference type="PDBsum" id="2BAO"/>
<dbReference type="PDBsum" id="2BAU"/>
<dbReference type="PDBsum" id="2J5X"/>
<dbReference type="PDBsum" id="2W83"/>
<dbReference type="PDBsum" id="3LVQ"/>
<dbReference type="PDBsum" id="3LVR"/>
<dbReference type="PDBsum" id="3N5C"/>
<dbReference type="PDBsum" id="3PCR"/>
<dbReference type="PDBsum" id="4FME"/>
<dbReference type="PDBsum" id="4KAX"/>
<dbReference type="PDBsum" id="6BBP"/>
<dbReference type="PDBsum" id="6BBQ"/>
<dbReference type="PDBsum" id="6PAU"/>
<dbReference type="PDBsum" id="7RK3"/>
<dbReference type="PDBsum" id="7XRD"/>
<dbReference type="EMDB" id="EMD-33414"/>
<dbReference type="EMDB" id="EMD-7077"/>
<dbReference type="EMDB" id="EMD-7078"/>
<dbReference type="SMR" id="P62330"/>
<dbReference type="BioGRID" id="106877">
    <property type="interactions" value="580"/>
</dbReference>
<dbReference type="DIP" id="DIP-33352N"/>
<dbReference type="FunCoup" id="P62330">
    <property type="interactions" value="2886"/>
</dbReference>
<dbReference type="IntAct" id="P62330">
    <property type="interactions" value="63"/>
</dbReference>
<dbReference type="MINT" id="P62330"/>
<dbReference type="STRING" id="9606.ENSP00000298316"/>
<dbReference type="BindingDB" id="P62330"/>
<dbReference type="ChEMBL" id="CHEMBL5987"/>
<dbReference type="DrugBank" id="DB01864">
    <property type="generic name" value="5'-Guanosine-Diphosphate-Monothiophosphate"/>
</dbReference>
<dbReference type="DrugBank" id="DB04315">
    <property type="generic name" value="Guanosine-5'-Diphosphate"/>
</dbReference>
<dbReference type="DrugBank" id="DB08231">
    <property type="generic name" value="Myristic acid"/>
</dbReference>
<dbReference type="GlyGen" id="P62330">
    <property type="glycosylation" value="1 site, 1 O-linked glycan (1 site)"/>
</dbReference>
<dbReference type="iPTMnet" id="P62330"/>
<dbReference type="PhosphoSitePlus" id="P62330"/>
<dbReference type="SwissPalm" id="P62330"/>
<dbReference type="BioMuta" id="ARF6"/>
<dbReference type="DMDM" id="51316984"/>
<dbReference type="jPOST" id="P62330"/>
<dbReference type="MassIVE" id="P62330"/>
<dbReference type="PaxDb" id="9606-ENSP00000298316"/>
<dbReference type="PeptideAtlas" id="P62330"/>
<dbReference type="ProteomicsDB" id="57396"/>
<dbReference type="Pumba" id="P62330"/>
<dbReference type="TopDownProteomics" id="P62330"/>
<dbReference type="Antibodypedia" id="3459">
    <property type="antibodies" value="464 antibodies from 38 providers"/>
</dbReference>
<dbReference type="DNASU" id="382"/>
<dbReference type="Ensembl" id="ENST00000298316.7">
    <property type="protein sequence ID" value="ENSP00000298316.5"/>
    <property type="gene ID" value="ENSG00000165527.8"/>
</dbReference>
<dbReference type="Ensembl" id="ENST00000693319.1">
    <property type="protein sequence ID" value="ENSP00000510419.1"/>
    <property type="gene ID" value="ENSG00000165527.8"/>
</dbReference>
<dbReference type="GeneID" id="382"/>
<dbReference type="KEGG" id="hsa:382"/>
<dbReference type="MANE-Select" id="ENST00000298316.7">
    <property type="protein sequence ID" value="ENSP00000298316.5"/>
    <property type="RefSeq nucleotide sequence ID" value="NM_001663.4"/>
    <property type="RefSeq protein sequence ID" value="NP_001654.1"/>
</dbReference>
<dbReference type="UCSC" id="uc001wxg.5">
    <property type="organism name" value="human"/>
</dbReference>
<dbReference type="AGR" id="HGNC:659"/>
<dbReference type="CTD" id="382"/>
<dbReference type="DisGeNET" id="382"/>
<dbReference type="GeneCards" id="ARF6"/>
<dbReference type="HGNC" id="HGNC:659">
    <property type="gene designation" value="ARF6"/>
</dbReference>
<dbReference type="HPA" id="ENSG00000165527">
    <property type="expression patterns" value="Low tissue specificity"/>
</dbReference>
<dbReference type="MIM" id="600464">
    <property type="type" value="gene"/>
</dbReference>
<dbReference type="neXtProt" id="NX_P62330"/>
<dbReference type="OpenTargets" id="ENSG00000165527"/>
<dbReference type="PharmGKB" id="PA24942"/>
<dbReference type="VEuPathDB" id="HostDB:ENSG00000165527"/>
<dbReference type="eggNOG" id="KOG0071">
    <property type="taxonomic scope" value="Eukaryota"/>
</dbReference>
<dbReference type="GeneTree" id="ENSGT00940000156593"/>
<dbReference type="HOGENOM" id="CLU_040729_9_4_1"/>
<dbReference type="InParanoid" id="P62330"/>
<dbReference type="OMA" id="GGQISKM"/>
<dbReference type="OrthoDB" id="2011769at2759"/>
<dbReference type="PAN-GO" id="P62330">
    <property type="GO annotations" value="9 GO annotations based on evolutionary models"/>
</dbReference>
<dbReference type="PhylomeDB" id="P62330"/>
<dbReference type="TreeFam" id="TF300808"/>
<dbReference type="BRENDA" id="3.6.5.2">
    <property type="organism ID" value="2681"/>
</dbReference>
<dbReference type="PathwayCommons" id="P62330"/>
<dbReference type="Reactome" id="R-HSA-8854214">
    <property type="pathway name" value="TBC/RABGAPs"/>
</dbReference>
<dbReference type="Reactome" id="R-HSA-8856828">
    <property type="pathway name" value="Clathrin-mediated endocytosis"/>
</dbReference>
<dbReference type="Reactome" id="R-HSA-8875656">
    <property type="pathway name" value="MET receptor recycling"/>
</dbReference>
<dbReference type="SignaLink" id="P62330"/>
<dbReference type="SIGNOR" id="P62330"/>
<dbReference type="BioGRID-ORCS" id="382">
    <property type="hits" value="117 hits in 1140 CRISPR screens"/>
</dbReference>
<dbReference type="ChiTaRS" id="ARF6">
    <property type="organism name" value="human"/>
</dbReference>
<dbReference type="EvolutionaryTrace" id="P62330"/>
<dbReference type="GeneWiki" id="ARF6"/>
<dbReference type="GenomeRNAi" id="382"/>
<dbReference type="Pharos" id="P62330">
    <property type="development level" value="Tbio"/>
</dbReference>
<dbReference type="PRO" id="PR:P62330"/>
<dbReference type="Proteomes" id="UP000005640">
    <property type="component" value="Chromosome 14"/>
</dbReference>
<dbReference type="RNAct" id="P62330">
    <property type="molecule type" value="protein"/>
</dbReference>
<dbReference type="Bgee" id="ENSG00000165527">
    <property type="expression patterns" value="Expressed in esophagus squamous epithelium and 213 other cell types or tissues"/>
</dbReference>
<dbReference type="GO" id="GO:0005938">
    <property type="term" value="C:cell cortex"/>
    <property type="evidence" value="ECO:0000314"/>
    <property type="project" value="UniProtKB"/>
</dbReference>
<dbReference type="GO" id="GO:0032154">
    <property type="term" value="C:cleavage furrow"/>
    <property type="evidence" value="ECO:0000314"/>
    <property type="project" value="UniProtKB"/>
</dbReference>
<dbReference type="GO" id="GO:0005737">
    <property type="term" value="C:cytoplasm"/>
    <property type="evidence" value="ECO:0000318"/>
    <property type="project" value="GO_Central"/>
</dbReference>
<dbReference type="GO" id="GO:0005829">
    <property type="term" value="C:cytosol"/>
    <property type="evidence" value="ECO:0000314"/>
    <property type="project" value="UniProtKB"/>
</dbReference>
<dbReference type="GO" id="GO:0031901">
    <property type="term" value="C:early endosome membrane"/>
    <property type="evidence" value="ECO:0007669"/>
    <property type="project" value="UniProtKB-SubCell"/>
</dbReference>
<dbReference type="GO" id="GO:0030139">
    <property type="term" value="C:endocytic vesicle"/>
    <property type="evidence" value="ECO:0000314"/>
    <property type="project" value="UniProtKB"/>
</dbReference>
<dbReference type="GO" id="GO:0005768">
    <property type="term" value="C:endosome"/>
    <property type="evidence" value="ECO:0000314"/>
    <property type="project" value="UniProtKB"/>
</dbReference>
<dbReference type="GO" id="GO:0070062">
    <property type="term" value="C:extracellular exosome"/>
    <property type="evidence" value="ECO:0007005"/>
    <property type="project" value="UniProtKB"/>
</dbReference>
<dbReference type="GO" id="GO:0031527">
    <property type="term" value="C:filopodium membrane"/>
    <property type="evidence" value="ECO:0000314"/>
    <property type="project" value="UniProtKB"/>
</dbReference>
<dbReference type="GO" id="GO:0090543">
    <property type="term" value="C:Flemming body"/>
    <property type="evidence" value="ECO:0000314"/>
    <property type="project" value="UniProtKB"/>
</dbReference>
<dbReference type="GO" id="GO:0005925">
    <property type="term" value="C:focal adhesion"/>
    <property type="evidence" value="ECO:0007005"/>
    <property type="project" value="UniProtKB"/>
</dbReference>
<dbReference type="GO" id="GO:0098978">
    <property type="term" value="C:glutamatergic synapse"/>
    <property type="evidence" value="ECO:0007669"/>
    <property type="project" value="Ensembl"/>
</dbReference>
<dbReference type="GO" id="GO:0005794">
    <property type="term" value="C:Golgi apparatus"/>
    <property type="evidence" value="ECO:0000314"/>
    <property type="project" value="UniProt"/>
</dbReference>
<dbReference type="GO" id="GO:0016020">
    <property type="term" value="C:membrane"/>
    <property type="evidence" value="ECO:0000314"/>
    <property type="project" value="FlyBase"/>
</dbReference>
<dbReference type="GO" id="GO:0030496">
    <property type="term" value="C:midbody"/>
    <property type="evidence" value="ECO:0000315"/>
    <property type="project" value="UniProt"/>
</dbReference>
<dbReference type="GO" id="GO:0005886">
    <property type="term" value="C:plasma membrane"/>
    <property type="evidence" value="ECO:0000314"/>
    <property type="project" value="UniProtKB"/>
</dbReference>
<dbReference type="GO" id="GO:0098794">
    <property type="term" value="C:postsynapse"/>
    <property type="evidence" value="ECO:0007669"/>
    <property type="project" value="Ensembl"/>
</dbReference>
<dbReference type="GO" id="GO:0098793">
    <property type="term" value="C:presynapse"/>
    <property type="evidence" value="ECO:0007669"/>
    <property type="project" value="Ensembl"/>
</dbReference>
<dbReference type="GO" id="GO:0055038">
    <property type="term" value="C:recycling endosome membrane"/>
    <property type="evidence" value="ECO:0000314"/>
    <property type="project" value="UniProtKB"/>
</dbReference>
<dbReference type="GO" id="GO:0001726">
    <property type="term" value="C:ruffle"/>
    <property type="evidence" value="ECO:0000314"/>
    <property type="project" value="UniProtKB"/>
</dbReference>
<dbReference type="GO" id="GO:0003925">
    <property type="term" value="F:G protein activity"/>
    <property type="evidence" value="ECO:0000314"/>
    <property type="project" value="UniProtKB"/>
</dbReference>
<dbReference type="GO" id="GO:0019003">
    <property type="term" value="F:GDP binding"/>
    <property type="evidence" value="ECO:0000314"/>
    <property type="project" value="UniProtKB"/>
</dbReference>
<dbReference type="GO" id="GO:0005525">
    <property type="term" value="F:GTP binding"/>
    <property type="evidence" value="ECO:0000314"/>
    <property type="project" value="UniProtKB"/>
</dbReference>
<dbReference type="GO" id="GO:0003924">
    <property type="term" value="F:GTPase activity"/>
    <property type="evidence" value="ECO:0000304"/>
    <property type="project" value="ProtInc"/>
</dbReference>
<dbReference type="GO" id="GO:0035591">
    <property type="term" value="F:signaling adaptor activity"/>
    <property type="evidence" value="ECO:0000314"/>
    <property type="project" value="UniProt"/>
</dbReference>
<dbReference type="GO" id="GO:0031996">
    <property type="term" value="F:thioesterase binding"/>
    <property type="evidence" value="ECO:0000353"/>
    <property type="project" value="UniProtKB"/>
</dbReference>
<dbReference type="GO" id="GO:0007155">
    <property type="term" value="P:cell adhesion"/>
    <property type="evidence" value="ECO:0000304"/>
    <property type="project" value="UniProtKB"/>
</dbReference>
<dbReference type="GO" id="GO:0030154">
    <property type="term" value="P:cell differentiation"/>
    <property type="evidence" value="ECO:0007669"/>
    <property type="project" value="UniProtKB-KW"/>
</dbReference>
<dbReference type="GO" id="GO:0051301">
    <property type="term" value="P:cell division"/>
    <property type="evidence" value="ECO:0007669"/>
    <property type="project" value="UniProtKB-KW"/>
</dbReference>
<dbReference type="GO" id="GO:1990090">
    <property type="term" value="P:cellular response to nerve growth factor stimulus"/>
    <property type="evidence" value="ECO:0007669"/>
    <property type="project" value="Ensembl"/>
</dbReference>
<dbReference type="GO" id="GO:0030866">
    <property type="term" value="P:cortical actin cytoskeleton organization"/>
    <property type="evidence" value="ECO:0000314"/>
    <property type="project" value="UniProtKB"/>
</dbReference>
<dbReference type="GO" id="GO:0032456">
    <property type="term" value="P:endocytic recycling"/>
    <property type="evidence" value="ECO:0000314"/>
    <property type="project" value="UniProtKB"/>
</dbReference>
<dbReference type="GO" id="GO:1902217">
    <property type="term" value="P:erythrocyte apoptotic process"/>
    <property type="evidence" value="ECO:0007669"/>
    <property type="project" value="Ensembl"/>
</dbReference>
<dbReference type="GO" id="GO:0090162">
    <property type="term" value="P:establishment of epithelial cell polarity"/>
    <property type="evidence" value="ECO:0007669"/>
    <property type="project" value="Ensembl"/>
</dbReference>
<dbReference type="GO" id="GO:0097284">
    <property type="term" value="P:hepatocyte apoptotic process"/>
    <property type="evidence" value="ECO:0007669"/>
    <property type="project" value="Ensembl"/>
</dbReference>
<dbReference type="GO" id="GO:0006886">
    <property type="term" value="P:intracellular protein transport"/>
    <property type="evidence" value="ECO:0000318"/>
    <property type="project" value="GO_Central"/>
</dbReference>
<dbReference type="GO" id="GO:0001889">
    <property type="term" value="P:liver development"/>
    <property type="evidence" value="ECO:0007669"/>
    <property type="project" value="Ensembl"/>
</dbReference>
<dbReference type="GO" id="GO:0099562">
    <property type="term" value="P:maintenance of postsynaptic density structure"/>
    <property type="evidence" value="ECO:0007669"/>
    <property type="project" value="Ensembl"/>
</dbReference>
<dbReference type="GO" id="GO:2000171">
    <property type="term" value="P:negative regulation of dendrite development"/>
    <property type="evidence" value="ECO:0007669"/>
    <property type="project" value="Ensembl"/>
</dbReference>
<dbReference type="GO" id="GO:2000009">
    <property type="term" value="P:negative regulation of protein localization to cell surface"/>
    <property type="evidence" value="ECO:0007669"/>
    <property type="project" value="Ensembl"/>
</dbReference>
<dbReference type="GO" id="GO:0048261">
    <property type="term" value="P:negative regulation of receptor-mediated endocytosis"/>
    <property type="evidence" value="ECO:0000304"/>
    <property type="project" value="UniProtKB"/>
</dbReference>
<dbReference type="GO" id="GO:0007399">
    <property type="term" value="P:nervous system development"/>
    <property type="evidence" value="ECO:0007669"/>
    <property type="project" value="UniProtKB-KW"/>
</dbReference>
<dbReference type="GO" id="GO:0030838">
    <property type="term" value="P:positive regulation of actin filament polymerization"/>
    <property type="evidence" value="ECO:0000315"/>
    <property type="project" value="UniProtKB"/>
</dbReference>
<dbReference type="GO" id="GO:0120183">
    <property type="term" value="P:positive regulation of focal adhesion disassembly"/>
    <property type="evidence" value="ECO:0000250"/>
    <property type="project" value="ARUK-UCL"/>
</dbReference>
<dbReference type="GO" id="GO:0051549">
    <property type="term" value="P:positive regulation of keratinocyte migration"/>
    <property type="evidence" value="ECO:0000250"/>
    <property type="project" value="ARUK-UCL"/>
</dbReference>
<dbReference type="GO" id="GO:1903438">
    <property type="term" value="P:positive regulation of mitotic cytokinetic process"/>
    <property type="evidence" value="ECO:0000315"/>
    <property type="project" value="UniProt"/>
</dbReference>
<dbReference type="GO" id="GO:0010976">
    <property type="term" value="P:positive regulation of neuron projection development"/>
    <property type="evidence" value="ECO:0000314"/>
    <property type="project" value="UniProt"/>
</dbReference>
<dbReference type="GO" id="GO:1903078">
    <property type="term" value="P:positive regulation of protein localization to plasma membrane"/>
    <property type="evidence" value="ECO:0000250"/>
    <property type="project" value="BHF-UCL"/>
</dbReference>
<dbReference type="GO" id="GO:0050714">
    <property type="term" value="P:positive regulation of protein secretion"/>
    <property type="evidence" value="ECO:0000315"/>
    <property type="project" value="UniProtKB"/>
</dbReference>
<dbReference type="GO" id="GO:0034394">
    <property type="term" value="P:protein localization to cell surface"/>
    <property type="evidence" value="ECO:0000250"/>
    <property type="project" value="BHF-UCL"/>
</dbReference>
<dbReference type="GO" id="GO:1905345">
    <property type="term" value="P:protein localization to cleavage furrow"/>
    <property type="evidence" value="ECO:0000315"/>
    <property type="project" value="UniProt"/>
</dbReference>
<dbReference type="GO" id="GO:0036010">
    <property type="term" value="P:protein localization to endosome"/>
    <property type="evidence" value="ECO:0000315"/>
    <property type="project" value="UniProtKB"/>
</dbReference>
<dbReference type="GO" id="GO:0072659">
    <property type="term" value="P:protein localization to plasma membrane"/>
    <property type="evidence" value="ECO:0000314"/>
    <property type="project" value="UniProt"/>
</dbReference>
<dbReference type="GO" id="GO:0060998">
    <property type="term" value="P:regulation of dendritic spine development"/>
    <property type="evidence" value="ECO:0000250"/>
    <property type="project" value="UniProtKB"/>
</dbReference>
<dbReference type="GO" id="GO:0051489">
    <property type="term" value="P:regulation of filopodium assembly"/>
    <property type="evidence" value="ECO:0000314"/>
    <property type="project" value="UniProtKB"/>
</dbReference>
<dbReference type="GO" id="GO:1905606">
    <property type="term" value="P:regulation of presynapse assembly"/>
    <property type="evidence" value="ECO:0007669"/>
    <property type="project" value="Ensembl"/>
</dbReference>
<dbReference type="GO" id="GO:0035020">
    <property type="term" value="P:regulation of Rac protein signal transduction"/>
    <property type="evidence" value="ECO:0000314"/>
    <property type="project" value="UniProtKB"/>
</dbReference>
<dbReference type="GO" id="GO:0097178">
    <property type="term" value="P:ruffle assembly"/>
    <property type="evidence" value="ECO:0000314"/>
    <property type="project" value="UniProtKB"/>
</dbReference>
<dbReference type="GO" id="GO:0048488">
    <property type="term" value="P:synaptic vesicle endocytosis"/>
    <property type="evidence" value="ECO:0007669"/>
    <property type="project" value="Ensembl"/>
</dbReference>
<dbReference type="GO" id="GO:0016192">
    <property type="term" value="P:vesicle-mediated transport"/>
    <property type="evidence" value="ECO:0000318"/>
    <property type="project" value="GO_Central"/>
</dbReference>
<dbReference type="CDD" id="cd04149">
    <property type="entry name" value="Arf6"/>
    <property type="match status" value="1"/>
</dbReference>
<dbReference type="DisProt" id="DP02815"/>
<dbReference type="FunFam" id="3.40.50.300:FF:000286">
    <property type="entry name" value="ADP-ribosylation factor 6"/>
    <property type="match status" value="1"/>
</dbReference>
<dbReference type="Gene3D" id="3.40.50.300">
    <property type="entry name" value="P-loop containing nucleotide triphosphate hydrolases"/>
    <property type="match status" value="1"/>
</dbReference>
<dbReference type="InterPro" id="IPR041838">
    <property type="entry name" value="Arf6"/>
</dbReference>
<dbReference type="InterPro" id="IPR027417">
    <property type="entry name" value="P-loop_NTPase"/>
</dbReference>
<dbReference type="InterPro" id="IPR005225">
    <property type="entry name" value="Small_GTP-bd"/>
</dbReference>
<dbReference type="InterPro" id="IPR024156">
    <property type="entry name" value="Small_GTPase_ARF"/>
</dbReference>
<dbReference type="InterPro" id="IPR006689">
    <property type="entry name" value="Small_GTPase_ARF/SAR"/>
</dbReference>
<dbReference type="NCBIfam" id="TIGR00231">
    <property type="entry name" value="small_GTP"/>
    <property type="match status" value="1"/>
</dbReference>
<dbReference type="PANTHER" id="PTHR11711">
    <property type="entry name" value="ADP RIBOSYLATION FACTOR-RELATED"/>
    <property type="match status" value="1"/>
</dbReference>
<dbReference type="Pfam" id="PF00025">
    <property type="entry name" value="Arf"/>
    <property type="match status" value="1"/>
</dbReference>
<dbReference type="PRINTS" id="PR00328">
    <property type="entry name" value="SAR1GTPBP"/>
</dbReference>
<dbReference type="SMART" id="SM00177">
    <property type="entry name" value="ARF"/>
    <property type="match status" value="1"/>
</dbReference>
<dbReference type="SMART" id="SM00175">
    <property type="entry name" value="RAB"/>
    <property type="match status" value="1"/>
</dbReference>
<dbReference type="SMART" id="SM00178">
    <property type="entry name" value="SAR"/>
    <property type="match status" value="1"/>
</dbReference>
<dbReference type="SUPFAM" id="SSF52540">
    <property type="entry name" value="P-loop containing nucleoside triphosphate hydrolases"/>
    <property type="match status" value="1"/>
</dbReference>
<dbReference type="PROSITE" id="PS51417">
    <property type="entry name" value="ARF"/>
    <property type="match status" value="1"/>
</dbReference>
<comment type="function">
    <text evidence="1 2 4 8 12 14 19 25 31 32 33 35 36">GTP-binding protein involved in protein trafficking that regulates endocytic recycling and cytoskeleton remodeling (PubMed:11266366, PubMed:16737952, PubMed:18400762, PubMed:21170023, PubMed:32103017, PubMed:7589240). GTP-bound form plays an important role in the transport of multiple palmitoylated proteins form the Golgi to the plasma membrane (PubMed:37461827). Required for normal completion of mitotic cytokinesis (By similarity). Plays a role in the reorganization of the actin cytoskeleton and the formation of stress fibers (By similarity). Involved in the regulation of dendritic spine development, contributing to the regulation of dendritic branching and filopodia extension (PubMed:14978216). Potentiates the neurite outgrowth in primary neurons by interacting with the molecular adapter APBB1 (PubMed:36250347). Plays an important role in membrane trafficking, during junctional remodeling and epithelial polarization (PubMed:36017701). Regulates surface levels of adherens junction proteins such as CDH1 (By similarity). Required for NTRK1 sorting to the recycling pathway from early endosomes (By similarity).</text>
</comment>
<comment type="function">
    <text evidence="12">(Microbial infection) Functions as an allosteric activator of the cholera toxin catalytic subunit, an ADP-ribosyltransferase.</text>
</comment>
<comment type="function">
    <text evidence="34">(Microbial infection) Plays a key role in the endocytosis of enterovirus 71 and thus viral entry into brain microvascular endothelial cells.</text>
</comment>
<comment type="catalytic activity">
    <reaction evidence="31">
        <text>GTP + H2O = GDP + phosphate + H(+)</text>
        <dbReference type="Rhea" id="RHEA:19669"/>
        <dbReference type="ChEBI" id="CHEBI:15377"/>
        <dbReference type="ChEBI" id="CHEBI:15378"/>
        <dbReference type="ChEBI" id="CHEBI:37565"/>
        <dbReference type="ChEBI" id="CHEBI:43474"/>
        <dbReference type="ChEBI" id="CHEBI:58189"/>
        <dbReference type="EC" id="3.6.5.2"/>
    </reaction>
    <physiologicalReaction direction="left-to-right" evidence="31">
        <dbReference type="Rhea" id="RHEA:19670"/>
    </physiologicalReaction>
</comment>
<comment type="activity regulation">
    <text evidence="2 3 19 32">Activation is generally mediated by a guanine exchange factor (GEF), while inactivation through hydrolysis of bound GTP is catalyzed by a GTPase activating protein (GAP). Activated by ASAP3. Inactivated by ACAP1 and ACAP2. Activated by NGF via NTRK1 (By similarity). Activated by PRKAA2 through its C-terminal regulatory domain (PubMed:36017701).</text>
</comment>
<comment type="subunit">
    <text evidence="1 2 5 6 9 10 11 13 14 15 17 18 20 22 23 24 26 29 32 33 35">Interacts (when activated) with GGA1, GGA2 and GGA3; the interaction is required for proper subcellular location of GGA1, GGA2 and GGA3 (PubMed:11950392). Interacts with PIP5K1C (PubMed:12847086). Interacts with USP6 (via Rab-GAP TBC domain) (PubMed:15509780). Interacts with RAB11FIP3 and RAB11FIP4 (PubMed:16148947, PubMed:17030804, PubMed:17628206). Interacts with HERC1 (PubMed:15642342). Interacts with ARHGAP21 (PubMed:15793564). Interacts with ASAP3; the interaction is stabilized by calcium ions (PubMed:16737952, PubMed:20510928). Interacts with NCS1/FREQ at the plasma membrane (PubMed:17555535). Interacts with TBC1D24 (PubMed:20727515). Interacts with ECPAS (PubMed:20682791). Interacts with MICALL1 (PubMed:21951725). Interacts with SPAG9 homodimers, forming heterotetramers (PubMed:19644450). Interacts with CYTH3 (PubMed:23940353). Interacts with ASAP2 (By similarity). Interacts with UACA (By similarity). Interacts with KIF23, forming heterodimers and heterotetramers (By similarity). Interacts with C9orf72 (By similarity). Interacts (GTP-bound form) with TJAP1/PILT (By similarity). Interacts with PRKAA2 (PubMed:36017701). Interacts with CD36 (when palmitoylated); this interaction mediates CD36 transport from the Golgi to the plasma membrane (PubMed:37461827). Interacts with APBB1 (PubMed:36250347).</text>
</comment>
<comment type="subunit">
    <text evidence="12">(Microbial infection) Interacts with the V.cholerae enterotoxin subunit A1; this causes a conformation change so that the toxin can bind NAD and catalyze the ADP-ribosylation of Gs alpha.</text>
</comment>
<comment type="subunit">
    <text evidence="25 27">(Microbial infection) Interacts with EspG from enteropathogenic E.coli.</text>
</comment>
<comment type="subunit">
    <text evidence="27">(Microbial infection) Identified in a complex with RAB1A and EspG from enteropathogenic E.coli.</text>
</comment>
<comment type="subunit">
    <text evidence="34">(Microbial infection) Interacts with human enterovirus 71 protein VP1.</text>
</comment>
<comment type="interaction">
    <interactant intactId="EBI-638181">
        <id>P62330</id>
    </interactant>
    <interactant intactId="EBI-81694">
        <id>O00213</id>
        <label>APBB1</label>
    </interactant>
    <organismsDiffer>false</organismsDiffer>
    <experiments>9</experiments>
</comment>
<comment type="interaction">
    <interactant intactId="EBI-638181">
        <id>P62330</id>
    </interactant>
    <interactant intactId="EBI-638194">
        <id>P53365</id>
        <label>ARFIP2</label>
    </interactant>
    <organismsDiffer>false</organismsDiffer>
    <experiments>4</experiments>
</comment>
<comment type="interaction">
    <interactant intactId="EBI-638181">
        <id>P62330</id>
    </interactant>
    <interactant intactId="EBI-988663">
        <id>P21283</id>
        <label>ATP6V1C1</label>
    </interactant>
    <organismsDiffer>false</organismsDiffer>
    <experiments>4</experiments>
</comment>
<comment type="interaction">
    <interactant intactId="EBI-638181">
        <id>P62330</id>
    </interactant>
    <interactant intactId="EBI-447404">
        <id>Q9NZ52</id>
        <label>GGA3</label>
    </interactant>
    <organismsDiffer>false</organismsDiffer>
    <experiments>3</experiments>
</comment>
<comment type="interaction">
    <interactant intactId="EBI-638181">
        <id>P62330</id>
    </interactant>
    <interactant intactId="EBI-306852">
        <id>Q02241</id>
        <label>KIF23</label>
    </interactant>
    <organismsDiffer>false</organismsDiffer>
    <experiments>23</experiments>
</comment>
<comment type="interaction">
    <interactant intactId="EBI-638181">
        <id>P62330</id>
    </interactant>
    <interactant intactId="EBI-16439278">
        <id>Q6FHY5</id>
        <label>MEOX2</label>
    </interactant>
    <organismsDiffer>false</organismsDiffer>
    <experiments>3</experiments>
</comment>
<comment type="interaction">
    <interactant intactId="EBI-638181">
        <id>P62330</id>
    </interactant>
    <interactant intactId="EBI-13301517">
        <id>Q96S97</id>
        <label>MYADM</label>
    </interactant>
    <organismsDiffer>false</organismsDiffer>
    <experiments>2</experiments>
</comment>
<comment type="interaction">
    <interactant intactId="EBI-638181">
        <id>P62330</id>
    </interactant>
    <interactant intactId="EBI-21502566">
        <id>O60271-2</id>
        <label>SPAG9</label>
    </interactant>
    <organismsDiffer>false</organismsDiffer>
    <experiments>8</experiments>
</comment>
<comment type="interaction">
    <interactant intactId="EBI-638181">
        <id>P62330</id>
    </interactant>
    <interactant intactId="EBI-10968870">
        <id>Q9ULP9-2</id>
        <label>TBC1D24</label>
    </interactant>
    <organismsDiffer>false</organismsDiffer>
    <experiments>2</experiments>
</comment>
<comment type="interaction">
    <interactant intactId="EBI-638181">
        <id>P62330</id>
    </interactant>
    <interactant intactId="EBI-25475891">
        <id>PRO_0000449632</id>
        <label>rep</label>
        <dbReference type="UniProtKB" id="P0DTD1"/>
    </interactant>
    <organismsDiffer>true</organismsDiffer>
    <experiments>3</experiments>
</comment>
<comment type="subcellular location">
    <subcellularLocation>
        <location evidence="14 28 31 32 36">Cytoplasm</location>
        <location evidence="14 28 31 32 36">Cytosol</location>
    </subcellularLocation>
    <subcellularLocation>
        <location evidence="14 16 17 31 32 34">Cell membrane</location>
        <topology evidence="31 36">Lipid-anchor</topology>
    </subcellularLocation>
    <subcellularLocation>
        <location evidence="21 23 26">Endosome membrane</location>
        <topology evidence="31 36">Lipid-anchor</topology>
    </subcellularLocation>
    <subcellularLocation>
        <location evidence="26">Recycling endosome membrane</location>
        <topology evidence="31 36">Lipid-anchor</topology>
    </subcellularLocation>
    <subcellularLocation>
        <location evidence="8">Cell projection</location>
        <location evidence="8">Filopodium membrane</location>
        <topology evidence="31 36">Lipid-anchor</topology>
    </subcellularLocation>
    <subcellularLocation>
        <location evidence="14">Cell projection</location>
        <location evidence="14">Ruffle</location>
    </subcellularLocation>
    <subcellularLocation>
        <location evidence="28">Cleavage furrow</location>
    </subcellularLocation>
    <subcellularLocation>
        <location evidence="28">Midbody</location>
        <location evidence="28">Midbody ring</location>
    </subcellularLocation>
    <subcellularLocation>
        <location evidence="1">Early endosome membrane</location>
        <topology evidence="1">Lipid-anchor</topology>
    </subcellularLocation>
    <subcellularLocation>
        <location evidence="1">Golgi apparatus</location>
        <location evidence="1">trans-Golgi network membrane</location>
        <topology evidence="1">Lipid-anchor</topology>
    </subcellularLocation>
    <text evidence="16 21 28 31 36">Distributed uniformly on the plasma membrane, as well as throughout the cytoplasm during metaphase. Subsequently concentrated at patches in the equatorial region at the onset of cytokinesis, and becomes distributed in the equatorial region concurrent with cleavage furrow ingression. In late stages of cytokinesis, concentrates at the midbody ring/Flemming body (PubMed:23603394). Recruitment to the midbody ring requires both activation by PSD/EFA6A and interaction with KIF23/MKLP1 (PubMed:23603394). After abscission of the intercellular bridge, incorporated into one of the daughter cells as a midbody remnant and localizes to punctate structures beneath the plasma membrane (PubMed:23603394). Recruited to the cell membrane in association with CYTH2 and ARL4C (PubMed:17398095). Colocalizes with DAB2IP at the plasma membrane and endocytic vesicles (PubMed:19948740). Myristoylation is required for proper localization to membranes: myristoylation on Lys-3 allows ARF6 to remain on membranes during the GTPase cycle (PubMed:32103017, PubMed:7589240).</text>
</comment>
<comment type="tissue specificity">
    <text evidence="7">Ubiquitous, with higher levels in heart, substantia nigra, and kidney.</text>
</comment>
<comment type="PTM">
    <text evidence="31">GTP-bound form is myristoylated on Lys-3 by NMT1 and NMT2, allowing ARF6 to remain on membranes during the GTPase cycle, thereby promoting its activity (PubMed:32103017). GDP-bound inactive form is demyristoylated on Lys-3 by SIRT2 at early endosomes or endocytic recycling compartment to allow its efficient activation by a guanine exchange factor (GEF) after GDP release (PubMed:32103017).</text>
</comment>
<comment type="similarity">
    <text evidence="38">Belongs to the small GTPase superfamily. Arf family.</text>
</comment>
<feature type="initiator methionine" description="Removed" evidence="30">
    <location>
        <position position="1"/>
    </location>
</feature>
<feature type="chain" id="PRO_0000207400" description="ADP-ribosylation factor 6">
    <location>
        <begin position="2"/>
        <end position="175"/>
    </location>
</feature>
<feature type="binding site" evidence="12 20 25 27 29">
    <location>
        <begin position="23"/>
        <end position="28"/>
    </location>
    <ligand>
        <name>GTP</name>
        <dbReference type="ChEBI" id="CHEBI:37565"/>
    </ligand>
</feature>
<feature type="binding site" evidence="12 20 25 27 29">
    <location>
        <begin position="41"/>
        <end position="44"/>
    </location>
    <ligand>
        <name>GTP</name>
        <dbReference type="ChEBI" id="CHEBI:37565"/>
    </ligand>
</feature>
<feature type="binding site" evidence="12 20 25 27 29">
    <location>
        <begin position="63"/>
        <end position="67"/>
    </location>
    <ligand>
        <name>GTP</name>
        <dbReference type="ChEBI" id="CHEBI:37565"/>
    </ligand>
</feature>
<feature type="binding site" evidence="12 20 25 27 29">
    <location>
        <begin position="122"/>
        <end position="125"/>
    </location>
    <ligand>
        <name>GTP</name>
        <dbReference type="ChEBI" id="CHEBI:37565"/>
    </ligand>
</feature>
<feature type="binding site" evidence="12 20 25 27 29">
    <location>
        <begin position="155"/>
        <end position="156"/>
    </location>
    <ligand>
        <name>GTP</name>
        <dbReference type="ChEBI" id="CHEBI:37565"/>
    </ligand>
</feature>
<feature type="lipid moiety-binding region" description="N-myristoyl glycine" evidence="30 36">
    <location>
        <position position="2"/>
    </location>
</feature>
<feature type="lipid moiety-binding region" description="N6-myristoyl lysine" evidence="31">
    <location>
        <position position="3"/>
    </location>
</feature>
<feature type="mutagenesis site" description="Fails to associate with membranes." evidence="36">
    <original>G</original>
    <variation>A</variation>
    <location>
        <position position="2"/>
    </location>
</feature>
<feature type="mutagenesis site" description="Abolished lysine-myristoylation, leading to decreased localization to membranes." evidence="31">
    <original>K</original>
    <variation>R</variation>
    <location>
        <position position="3"/>
    </location>
</feature>
<feature type="mutagenesis site" description="Constitutively inactivated. Fails to associate with membranes. Does not inhibit filopodia formation." evidence="8 14 16 31">
    <original>T</original>
    <variation>N</variation>
    <location>
        <position position="27"/>
    </location>
</feature>
<feature type="mutagenesis site" description="Constitutively active. Inhibits filopodia formation and dendritic branching." evidence="8 14 31">
    <original>Q</original>
    <variation>L</variation>
    <location>
        <position position="67"/>
    </location>
</feature>
<feature type="helix" evidence="40">
    <location>
        <begin position="3"/>
        <end position="9"/>
    </location>
</feature>
<feature type="strand" evidence="41">
    <location>
        <begin position="13"/>
        <end position="19"/>
    </location>
</feature>
<feature type="helix" evidence="41">
    <location>
        <begin position="26"/>
        <end position="35"/>
    </location>
</feature>
<feature type="strand" evidence="40">
    <location>
        <begin position="39"/>
        <end position="44"/>
    </location>
</feature>
<feature type="strand" evidence="41">
    <location>
        <begin position="45"/>
        <end position="54"/>
    </location>
</feature>
<feature type="strand" evidence="41">
    <location>
        <begin position="57"/>
        <end position="64"/>
    </location>
</feature>
<feature type="helix" evidence="43">
    <location>
        <begin position="65"/>
        <end position="67"/>
    </location>
</feature>
<feature type="helix" evidence="41">
    <location>
        <begin position="68"/>
        <end position="77"/>
    </location>
</feature>
<feature type="turn" evidence="40">
    <location>
        <begin position="78"/>
        <end position="80"/>
    </location>
</feature>
<feature type="strand" evidence="41">
    <location>
        <begin position="83"/>
        <end position="89"/>
    </location>
</feature>
<feature type="helix" evidence="41">
    <location>
        <begin position="93"/>
        <end position="95"/>
    </location>
</feature>
<feature type="helix" evidence="41">
    <location>
        <begin position="96"/>
        <end position="107"/>
    </location>
</feature>
<feature type="helix" evidence="41">
    <location>
        <begin position="110"/>
        <end position="112"/>
    </location>
</feature>
<feature type="strand" evidence="41">
    <location>
        <begin position="116"/>
        <end position="122"/>
    </location>
</feature>
<feature type="strand" evidence="42">
    <location>
        <begin position="125"/>
        <end position="128"/>
    </location>
</feature>
<feature type="helix" evidence="41">
    <location>
        <begin position="132"/>
        <end position="138"/>
    </location>
</feature>
<feature type="helix" evidence="41">
    <location>
        <begin position="141"/>
        <end position="143"/>
    </location>
</feature>
<feature type="strand" evidence="41">
    <location>
        <begin position="149"/>
        <end position="153"/>
    </location>
</feature>
<feature type="turn" evidence="41">
    <location>
        <begin position="156"/>
        <end position="159"/>
    </location>
</feature>
<feature type="helix" evidence="41">
    <location>
        <begin position="162"/>
        <end position="172"/>
    </location>
</feature>
<proteinExistence type="evidence at protein level"/>
<organism>
    <name type="scientific">Homo sapiens</name>
    <name type="common">Human</name>
    <dbReference type="NCBI Taxonomy" id="9606"/>
    <lineage>
        <taxon>Eukaryota</taxon>
        <taxon>Metazoa</taxon>
        <taxon>Chordata</taxon>
        <taxon>Craniata</taxon>
        <taxon>Vertebrata</taxon>
        <taxon>Euteleostomi</taxon>
        <taxon>Mammalia</taxon>
        <taxon>Eutheria</taxon>
        <taxon>Euarchontoglires</taxon>
        <taxon>Primates</taxon>
        <taxon>Haplorrhini</taxon>
        <taxon>Catarrhini</taxon>
        <taxon>Hominidae</taxon>
        <taxon>Homo</taxon>
    </lineage>
</organism>
<evidence type="ECO:0000250" key="1">
    <source>
        <dbReference type="UniProtKB" id="P62331"/>
    </source>
</evidence>
<evidence type="ECO:0000250" key="2">
    <source>
        <dbReference type="UniProtKB" id="P62332"/>
    </source>
</evidence>
<evidence type="ECO:0000269" key="3">
    <source>
    </source>
</evidence>
<evidence type="ECO:0000269" key="4">
    <source>
    </source>
</evidence>
<evidence type="ECO:0000269" key="5">
    <source>
    </source>
</evidence>
<evidence type="ECO:0000269" key="6">
    <source>
    </source>
</evidence>
<evidence type="ECO:0000269" key="7">
    <source>
    </source>
</evidence>
<evidence type="ECO:0000269" key="8">
    <source>
    </source>
</evidence>
<evidence type="ECO:0000269" key="9">
    <source>
    </source>
</evidence>
<evidence type="ECO:0000269" key="10">
    <source>
    </source>
</evidence>
<evidence type="ECO:0000269" key="11">
    <source>
    </source>
</evidence>
<evidence type="ECO:0000269" key="12">
    <source>
    </source>
</evidence>
<evidence type="ECO:0000269" key="13">
    <source>
    </source>
</evidence>
<evidence type="ECO:0000269" key="14">
    <source>
    </source>
</evidence>
<evidence type="ECO:0000269" key="15">
    <source>
    </source>
</evidence>
<evidence type="ECO:0000269" key="16">
    <source>
    </source>
</evidence>
<evidence type="ECO:0000269" key="17">
    <source>
    </source>
</evidence>
<evidence type="ECO:0000269" key="18">
    <source>
    </source>
</evidence>
<evidence type="ECO:0000269" key="19">
    <source>
    </source>
</evidence>
<evidence type="ECO:0000269" key="20">
    <source>
    </source>
</evidence>
<evidence type="ECO:0000269" key="21">
    <source>
    </source>
</evidence>
<evidence type="ECO:0000269" key="22">
    <source>
    </source>
</evidence>
<evidence type="ECO:0000269" key="23">
    <source>
    </source>
</evidence>
<evidence type="ECO:0000269" key="24">
    <source>
    </source>
</evidence>
<evidence type="ECO:0000269" key="25">
    <source>
    </source>
</evidence>
<evidence type="ECO:0000269" key="26">
    <source>
    </source>
</evidence>
<evidence type="ECO:0000269" key="27">
    <source>
    </source>
</evidence>
<evidence type="ECO:0000269" key="28">
    <source>
    </source>
</evidence>
<evidence type="ECO:0000269" key="29">
    <source>
    </source>
</evidence>
<evidence type="ECO:0000269" key="30">
    <source>
    </source>
</evidence>
<evidence type="ECO:0000269" key="31">
    <source>
    </source>
</evidence>
<evidence type="ECO:0000269" key="32">
    <source>
    </source>
</evidence>
<evidence type="ECO:0000269" key="33">
    <source>
    </source>
</evidence>
<evidence type="ECO:0000269" key="34">
    <source>
    </source>
</evidence>
<evidence type="ECO:0000269" key="35">
    <source>
    </source>
</evidence>
<evidence type="ECO:0000269" key="36">
    <source>
    </source>
</evidence>
<evidence type="ECO:0000303" key="37">
    <source ref="6"/>
</evidence>
<evidence type="ECO:0000305" key="38"/>
<evidence type="ECO:0000312" key="39">
    <source>
        <dbReference type="HGNC" id="HGNC:659"/>
    </source>
</evidence>
<evidence type="ECO:0007829" key="40">
    <source>
        <dbReference type="PDB" id="1E0S"/>
    </source>
</evidence>
<evidence type="ECO:0007829" key="41">
    <source>
        <dbReference type="PDB" id="2A5D"/>
    </source>
</evidence>
<evidence type="ECO:0007829" key="42">
    <source>
        <dbReference type="PDB" id="3LVQ"/>
    </source>
</evidence>
<evidence type="ECO:0007829" key="43">
    <source>
        <dbReference type="PDB" id="3N5C"/>
    </source>
</evidence>
<keyword id="KW-0002">3D-structure</keyword>
<keyword id="KW-0131">Cell cycle</keyword>
<keyword id="KW-0132">Cell division</keyword>
<keyword id="KW-1003">Cell membrane</keyword>
<keyword id="KW-0966">Cell projection</keyword>
<keyword id="KW-0963">Cytoplasm</keyword>
<keyword id="KW-0221">Differentiation</keyword>
<keyword id="KW-0967">Endosome</keyword>
<keyword id="KW-0333">Golgi apparatus</keyword>
<keyword id="KW-0342">GTP-binding</keyword>
<keyword id="KW-0378">Hydrolase</keyword>
<keyword id="KW-0449">Lipoprotein</keyword>
<keyword id="KW-0472">Membrane</keyword>
<keyword id="KW-0519">Myristate</keyword>
<keyword id="KW-0524">Neurogenesis</keyword>
<keyword id="KW-0547">Nucleotide-binding</keyword>
<keyword id="KW-0653">Protein transport</keyword>
<keyword id="KW-1267">Proteomics identification</keyword>
<keyword id="KW-1185">Reference proteome</keyword>
<keyword id="KW-0813">Transport</keyword>
<accession>P62330</accession>
<accession>P26438</accession>
<accession>Q6FGZ2</accession>
<reference key="1">
    <citation type="journal article" date="1991" name="J. Biol. Chem.">
        <title>Molecular identification of ADP-ribosylation factor mRNAs and their expression in mammalian cells.</title>
        <authorList>
            <person name="Tsuchiya M."/>
            <person name="Price S.R."/>
            <person name="Tsai S.-C."/>
            <person name="Moss J."/>
            <person name="Vaughan M."/>
        </authorList>
    </citation>
    <scope>NUCLEOTIDE SEQUENCE [MRNA]</scope>
</reference>
<reference key="2">
    <citation type="journal article" date="2003" name="DNA Cell Biol.">
        <title>Sequence, genomic organization, and expression of the human ADP-ribosylation factor 6 (ARF6) gene: a class III ARF.</title>
        <authorList>
            <person name="Lebeda R.A."/>
            <person name="Johnson S.K."/>
            <person name="Stewart M.I."/>
            <person name="Haun R.S."/>
        </authorList>
    </citation>
    <scope>NUCLEOTIDE SEQUENCE [GENOMIC DNA]</scope>
    <scope>TISSUE SPECIFICITY</scope>
</reference>
<reference key="3">
    <citation type="journal article" date="1998" name="Proc. Natl. Acad. Sci. U.S.A.">
        <title>Identification of genes expressed in human CD34(+) hematopoietic stem/progenitor cells by expressed sequence tags and efficient full-length cDNA cloning.</title>
        <authorList>
            <person name="Mao M."/>
            <person name="Fu G."/>
            <person name="Wu J.-S."/>
            <person name="Zhang Q.-H."/>
            <person name="Zhou J."/>
            <person name="Kan L.-X."/>
            <person name="Huang Q.-H."/>
            <person name="He K.-L."/>
            <person name="Gu B.-W."/>
            <person name="Han Z.-G."/>
            <person name="Shen Y."/>
            <person name="Gu J."/>
            <person name="Yu Y.-P."/>
            <person name="Xu S.-H."/>
            <person name="Wang Y.-X."/>
            <person name="Chen S.-J."/>
            <person name="Chen Z."/>
        </authorList>
    </citation>
    <scope>NUCLEOTIDE SEQUENCE [LARGE SCALE MRNA]</scope>
    <source>
        <tissue>Umbilical cord blood</tissue>
    </source>
</reference>
<reference key="4">
    <citation type="submission" date="2002-03" db="EMBL/GenBank/DDBJ databases">
        <title>cDNA clones of human proteins involved in signal transduction sequenced by the Guthrie cDNA resource center (www.cdna.org).</title>
        <authorList>
            <person name="Puhl H.L. III"/>
            <person name="Ikeda S.R."/>
            <person name="Aronstam R.S."/>
        </authorList>
    </citation>
    <scope>NUCLEOTIDE SEQUENCE [LARGE SCALE MRNA]</scope>
    <source>
        <tissue>Brain</tissue>
    </source>
</reference>
<reference key="5">
    <citation type="journal article" date="2004" name="Nat. Genet.">
        <title>Complete sequencing and characterization of 21,243 full-length human cDNAs.</title>
        <authorList>
            <person name="Ota T."/>
            <person name="Suzuki Y."/>
            <person name="Nishikawa T."/>
            <person name="Otsuki T."/>
            <person name="Sugiyama T."/>
            <person name="Irie R."/>
            <person name="Wakamatsu A."/>
            <person name="Hayashi K."/>
            <person name="Sato H."/>
            <person name="Nagai K."/>
            <person name="Kimura K."/>
            <person name="Makita H."/>
            <person name="Sekine M."/>
            <person name="Obayashi M."/>
            <person name="Nishi T."/>
            <person name="Shibahara T."/>
            <person name="Tanaka T."/>
            <person name="Ishii S."/>
            <person name="Yamamoto J."/>
            <person name="Saito K."/>
            <person name="Kawai Y."/>
            <person name="Isono Y."/>
            <person name="Nakamura Y."/>
            <person name="Nagahari K."/>
            <person name="Murakami K."/>
            <person name="Yasuda T."/>
            <person name="Iwayanagi T."/>
            <person name="Wagatsuma M."/>
            <person name="Shiratori A."/>
            <person name="Sudo H."/>
            <person name="Hosoiri T."/>
            <person name="Kaku Y."/>
            <person name="Kodaira H."/>
            <person name="Kondo H."/>
            <person name="Sugawara M."/>
            <person name="Takahashi M."/>
            <person name="Kanda K."/>
            <person name="Yokoi T."/>
            <person name="Furuya T."/>
            <person name="Kikkawa E."/>
            <person name="Omura Y."/>
            <person name="Abe K."/>
            <person name="Kamihara K."/>
            <person name="Katsuta N."/>
            <person name="Sato K."/>
            <person name="Tanikawa M."/>
            <person name="Yamazaki M."/>
            <person name="Ninomiya K."/>
            <person name="Ishibashi T."/>
            <person name="Yamashita H."/>
            <person name="Murakawa K."/>
            <person name="Fujimori K."/>
            <person name="Tanai H."/>
            <person name="Kimata M."/>
            <person name="Watanabe M."/>
            <person name="Hiraoka S."/>
            <person name="Chiba Y."/>
            <person name="Ishida S."/>
            <person name="Ono Y."/>
            <person name="Takiguchi S."/>
            <person name="Watanabe S."/>
            <person name="Yosida M."/>
            <person name="Hotuta T."/>
            <person name="Kusano J."/>
            <person name="Kanehori K."/>
            <person name="Takahashi-Fujii A."/>
            <person name="Hara H."/>
            <person name="Tanase T.-O."/>
            <person name="Nomura Y."/>
            <person name="Togiya S."/>
            <person name="Komai F."/>
            <person name="Hara R."/>
            <person name="Takeuchi K."/>
            <person name="Arita M."/>
            <person name="Imose N."/>
            <person name="Musashino K."/>
            <person name="Yuuki H."/>
            <person name="Oshima A."/>
            <person name="Sasaki N."/>
            <person name="Aotsuka S."/>
            <person name="Yoshikawa Y."/>
            <person name="Matsunawa H."/>
            <person name="Ichihara T."/>
            <person name="Shiohata N."/>
            <person name="Sano S."/>
            <person name="Moriya S."/>
            <person name="Momiyama H."/>
            <person name="Satoh N."/>
            <person name="Takami S."/>
            <person name="Terashima Y."/>
            <person name="Suzuki O."/>
            <person name="Nakagawa S."/>
            <person name="Senoh A."/>
            <person name="Mizoguchi H."/>
            <person name="Goto Y."/>
            <person name="Shimizu F."/>
            <person name="Wakebe H."/>
            <person name="Hishigaki H."/>
            <person name="Watanabe T."/>
            <person name="Sugiyama A."/>
            <person name="Takemoto M."/>
            <person name="Kawakami B."/>
            <person name="Yamazaki M."/>
            <person name="Watanabe K."/>
            <person name="Kumagai A."/>
            <person name="Itakura S."/>
            <person name="Fukuzumi Y."/>
            <person name="Fujimori Y."/>
            <person name="Komiyama M."/>
            <person name="Tashiro H."/>
            <person name="Tanigami A."/>
            <person name="Fujiwara T."/>
            <person name="Ono T."/>
            <person name="Yamada K."/>
            <person name="Fujii Y."/>
            <person name="Ozaki K."/>
            <person name="Hirao M."/>
            <person name="Ohmori Y."/>
            <person name="Kawabata A."/>
            <person name="Hikiji T."/>
            <person name="Kobatake N."/>
            <person name="Inagaki H."/>
            <person name="Ikema Y."/>
            <person name="Okamoto S."/>
            <person name="Okitani R."/>
            <person name="Kawakami T."/>
            <person name="Noguchi S."/>
            <person name="Itoh T."/>
            <person name="Shigeta K."/>
            <person name="Senba T."/>
            <person name="Matsumura K."/>
            <person name="Nakajima Y."/>
            <person name="Mizuno T."/>
            <person name="Morinaga M."/>
            <person name="Sasaki M."/>
            <person name="Togashi T."/>
            <person name="Oyama M."/>
            <person name="Hata H."/>
            <person name="Watanabe M."/>
            <person name="Komatsu T."/>
            <person name="Mizushima-Sugano J."/>
            <person name="Satoh T."/>
            <person name="Shirai Y."/>
            <person name="Takahashi Y."/>
            <person name="Nakagawa K."/>
            <person name="Okumura K."/>
            <person name="Nagase T."/>
            <person name="Nomura N."/>
            <person name="Kikuchi H."/>
            <person name="Masuho Y."/>
            <person name="Yamashita R."/>
            <person name="Nakai K."/>
            <person name="Yada T."/>
            <person name="Nakamura Y."/>
            <person name="Ohara O."/>
            <person name="Isogai T."/>
            <person name="Sugano S."/>
        </authorList>
    </citation>
    <scope>NUCLEOTIDE SEQUENCE [LARGE SCALE MRNA]</scope>
    <source>
        <tissue>Trachea</tissue>
    </source>
</reference>
<reference key="6">
    <citation type="submission" date="2004-06" db="EMBL/GenBank/DDBJ databases">
        <title>Cloning of human full open reading frames in Gateway(TM) system entry vector (pDONR201).</title>
        <authorList>
            <person name="Ebert L."/>
            <person name="Schick M."/>
            <person name="Neubert P."/>
            <person name="Schatten R."/>
            <person name="Henze S."/>
            <person name="Korn B."/>
        </authorList>
    </citation>
    <scope>NUCLEOTIDE SEQUENCE [LARGE SCALE MRNA]</scope>
</reference>
<reference key="7">
    <citation type="submission" date="2005-09" db="EMBL/GenBank/DDBJ databases">
        <authorList>
            <person name="Mural R.J."/>
            <person name="Istrail S."/>
            <person name="Sutton G."/>
            <person name="Florea L."/>
            <person name="Halpern A.L."/>
            <person name="Mobarry C.M."/>
            <person name="Lippert R."/>
            <person name="Walenz B."/>
            <person name="Shatkay H."/>
            <person name="Dew I."/>
            <person name="Miller J.R."/>
            <person name="Flanigan M.J."/>
            <person name="Edwards N.J."/>
            <person name="Bolanos R."/>
            <person name="Fasulo D."/>
            <person name="Halldorsson B.V."/>
            <person name="Hannenhalli S."/>
            <person name="Turner R."/>
            <person name="Yooseph S."/>
            <person name="Lu F."/>
            <person name="Nusskern D.R."/>
            <person name="Shue B.C."/>
            <person name="Zheng X.H."/>
            <person name="Zhong F."/>
            <person name="Delcher A.L."/>
            <person name="Huson D.H."/>
            <person name="Kravitz S.A."/>
            <person name="Mouchard L."/>
            <person name="Reinert K."/>
            <person name="Remington K.A."/>
            <person name="Clark A.G."/>
            <person name="Waterman M.S."/>
            <person name="Eichler E.E."/>
            <person name="Adams M.D."/>
            <person name="Hunkapiller M.W."/>
            <person name="Myers E.W."/>
            <person name="Venter J.C."/>
        </authorList>
    </citation>
    <scope>NUCLEOTIDE SEQUENCE [LARGE SCALE GENOMIC DNA]</scope>
</reference>
<reference key="8">
    <citation type="journal article" date="2004" name="Genome Res.">
        <title>The status, quality, and expansion of the NIH full-length cDNA project: the Mammalian Gene Collection (MGC).</title>
        <authorList>
            <consortium name="The MGC Project Team"/>
        </authorList>
    </citation>
    <scope>NUCLEOTIDE SEQUENCE [LARGE SCALE MRNA]</scope>
    <source>
        <tissue>Skin</tissue>
        <tissue>Uterus</tissue>
    </source>
</reference>
<reference key="9">
    <citation type="journal article" date="1995" name="Exp. Cell Res.">
        <title>Myristoylation is required for the intracellular localization and endocytic function of ARF6.</title>
        <authorList>
            <person name="D'Souza-Schorey C."/>
            <person name="Stahl P.D."/>
        </authorList>
    </citation>
    <scope>MYRISTOYLATION AT GLY-2</scope>
    <scope>FUNCTION</scope>
    <scope>SUBCELLULAR LOCATION</scope>
    <scope>MUTAGENESIS OF GLY-2</scope>
</reference>
<reference key="10">
    <citation type="journal article" date="2000" name="J. Cell Biol.">
        <title>ACAPs are arf6 GTPase-activating proteins that function in the cell periphery.</title>
        <authorList>
            <person name="Jackson T.R."/>
            <person name="Brown F.D."/>
            <person name="Nie Z."/>
            <person name="Miura K."/>
            <person name="Foroni L."/>
            <person name="Sun J."/>
            <person name="Hsu V.W."/>
            <person name="Donaldson J.G."/>
            <person name="Randazzo P.A."/>
        </authorList>
    </citation>
    <scope>ACTIVITY REGULATION</scope>
    <source>
        <tissue>Leukocyte</tissue>
    </source>
</reference>
<reference key="11">
    <citation type="journal article" date="2002" name="Biochem. J.">
        <title>GGA proteins associate with Golgi membranes through interaction between their GGAH domains and ADP-ribosylation factors.</title>
        <authorList>
            <person name="Takatsu H."/>
            <person name="Yoshino K."/>
            <person name="Toda K."/>
            <person name="Nakayama K."/>
        </authorList>
    </citation>
    <scope>INTERACTION WITH GGA1; GGA2 AND GGA3</scope>
</reference>
<reference key="12">
    <citation type="journal article" date="2003" name="J. Cell Biol.">
        <title>ARF6 stimulates clathrin/AP-2 recruitment to synaptic membranes by activating phosphatidylinositol phosphate kinase type Igamma.</title>
        <authorList>
            <person name="Krauss M."/>
            <person name="Kinuta M."/>
            <person name="Wenk M.R."/>
            <person name="De Camilli P."/>
            <person name="Takei K."/>
            <person name="Haucke V."/>
        </authorList>
    </citation>
    <scope>INTERACTION WITH PIP5K1C</scope>
</reference>
<reference key="13">
    <citation type="journal article" date="2004" name="Mol. Cell. Biol.">
        <title>The TBC (Tre-2/Bub2/Cdc16) domain protein TRE17 regulates plasma membrane-endosomal trafficking through activation of Arf6.</title>
        <authorList>
            <person name="Martinu L."/>
            <person name="Masuda-Robens J.M."/>
            <person name="Robertson S.E."/>
            <person name="Santy L.C."/>
            <person name="Casanova J.E."/>
            <person name="Chou M.M."/>
        </authorList>
    </citation>
    <scope>INTERACTION WITH USP6</scope>
</reference>
<reference key="14">
    <citation type="journal article" date="2004" name="Mol. Biol. Cell">
        <title>Regulation of dendritic branching and filopodia formation in hippocampal neurons by specific acylated protein motifs.</title>
        <authorList>
            <person name="Gauthier-Campbell C."/>
            <person name="Bredt D.S."/>
            <person name="Murphy T.H."/>
            <person name="El-Husseini A."/>
        </authorList>
    </citation>
    <scope>FUNCTION</scope>
    <scope>SUBCELLULAR LOCATION</scope>
    <scope>MUTAGENESIS OF THR-27 AND GLN-67</scope>
</reference>
<reference key="15">
    <citation type="journal article" date="2005" name="EMBO J.">
        <title>Rab11-FIP3 and FIP4 interact with Arf6 and the exocyst to control membrane traffic in cytokinesis.</title>
        <authorList>
            <person name="Fielding A.B."/>
            <person name="Schonteich E."/>
            <person name="Matheson J."/>
            <person name="Wilson G."/>
            <person name="Yu X."/>
            <person name="Hickson G.R."/>
            <person name="Srivastava S."/>
            <person name="Baldwin S.A."/>
            <person name="Prekeris R."/>
            <person name="Gould G.W."/>
        </authorList>
    </citation>
    <scope>INTERACTION WITH RAB11FIP3 AND RAB11FIP4</scope>
</reference>
<reference key="16">
    <citation type="journal article" date="2005" name="FEBS Lett.">
        <title>Requirement of phosphatidylinositol-4,5-bisphosphate for HERC1-mediated guanine nucleotide release from ARF proteins.</title>
        <authorList>
            <person name="Garcia-Gonzalo F.R."/>
            <person name="Bartrons R."/>
            <person name="Ventura F."/>
            <person name="Rosa J.L."/>
        </authorList>
    </citation>
    <scope>INTERACTION WITH HERC1</scope>
</reference>
<reference key="17">
    <citation type="journal article" date="2005" name="Nat. Cell Biol.">
        <title>Golgi-localized GAP for Cdc42 functions downstream of ARF1 to control Arp2/3 complex and F-actin dynamics.</title>
        <authorList>
            <person name="Dubois T."/>
            <person name="Paleotti O."/>
            <person name="Mironov A.A. Jr."/>
            <person name="Fraisier V."/>
            <person name="Stradal T.E.B."/>
            <person name="De Matteis M.A."/>
            <person name="Franco M."/>
            <person name="Chavrier P."/>
        </authorList>
    </citation>
    <scope>INTERACTION WITH ARHGAP21</scope>
</reference>
<reference key="18">
    <citation type="journal article" date="2006" name="Mol. Cell. Proteomics">
        <title>Proteomic identification and functional characterization of a novel ARF6 GTPase-activating protein, ACAP4.</title>
        <authorList>
            <person name="Fang Z."/>
            <person name="Miao Y."/>
            <person name="Ding X."/>
            <person name="Deng H."/>
            <person name="Liu S."/>
            <person name="Wang F."/>
            <person name="Zhou R."/>
            <person name="Watson C."/>
            <person name="Fu C."/>
            <person name="Hu Q."/>
            <person name="Lillard J.W. Jr."/>
            <person name="Powell M."/>
            <person name="Chen Y."/>
            <person name="Forte J.G."/>
            <person name="Yao X."/>
        </authorList>
    </citation>
    <scope>FUNCTION</scope>
    <scope>SUBCELLULAR LOCATION</scope>
    <scope>MUTAGENESIS OF THR-27 AND GLN-67</scope>
    <scope>INTERACTION WITH ASAP3</scope>
</reference>
<reference key="19">
    <citation type="journal article" date="2006" name="Proc. Natl. Acad. Sci. U.S.A.">
        <title>Structural basis for Rab11-dependent membrane recruitment of a family of Rab11-interacting protein 3 (FIP3)/Arfophilin-1.</title>
        <authorList>
            <person name="Shiba T."/>
            <person name="Koga H."/>
            <person name="Shin H.-W."/>
            <person name="Kawasaki M."/>
            <person name="Kato R."/>
            <person name="Nakayama K."/>
            <person name="Wakatsuki S."/>
        </authorList>
    </citation>
    <scope>INTERACTION WITH RAB11FIP3 AND RAB11FIP4</scope>
</reference>
<reference key="20">
    <citation type="journal article" date="2007" name="Curr. Biol.">
        <title>The Arl4 family of small G proteins can recruit the cytohesin Arf6 exchange factors to the plasma membrane.</title>
        <authorList>
            <person name="Hofmann I."/>
            <person name="Thompson A."/>
            <person name="Sanderson C.M."/>
            <person name="Munro S."/>
        </authorList>
    </citation>
    <scope>MUTAGENESIS OF THR-27</scope>
    <scope>SUBCELLULAR LOCATION</scope>
</reference>
<reference key="21">
    <citation type="journal article" date="2007" name="Eur. J. Cell Biol.">
        <title>Molecular characterization of Rab11-FIP3 binding to ARF GTPases.</title>
        <authorList>
            <person name="Schonteich E."/>
            <person name="Pilli M."/>
            <person name="Simon G.C."/>
            <person name="Matern H.T."/>
            <person name="Junutula J.R."/>
            <person name="Sentz D."/>
            <person name="Holmes R.K."/>
            <person name="Prekeris R."/>
        </authorList>
    </citation>
    <scope>INTERACTION WITH RAB11FIP3</scope>
</reference>
<reference key="22">
    <citation type="journal article" date="2007" name="Traffic">
        <title>Specificity, promiscuity and localization of ARF protein interactions with NCS-1 and phosphatidylinositol-4 kinase-III beta.</title>
        <authorList>
            <person name="Haynes L.P."/>
            <person name="Sherwood M.W."/>
            <person name="Dolman N.J."/>
            <person name="Burgoyne R.D."/>
        </authorList>
    </citation>
    <scope>INTERACTION WITH NCS1</scope>
    <scope>SUBCELLULAR LOCATION</scope>
</reference>
<reference key="23">
    <citation type="journal article" date="2008" name="J. Biol. Chem.">
        <title>ASAP3 is a focal adhesion-associated Arf GAP that functions in cell migration and invasion.</title>
        <authorList>
            <person name="Ha V.L."/>
            <person name="Bharti S."/>
            <person name="Inoue H."/>
            <person name="Vass W.C."/>
            <person name="Campa F."/>
            <person name="Nie Z."/>
            <person name="de Gramont A."/>
            <person name="Ward Y."/>
            <person name="Randazzo P.A."/>
        </authorList>
    </citation>
    <scope>FUNCTION</scope>
    <scope>ACTIVITY REGULATION</scope>
</reference>
<reference key="24">
    <citation type="journal article" date="2010" name="Am. J. Hum. Genet.">
        <title>TBC1D24, an ARF6-interacting protein, is mutated in familial infantile myoclonic epilepsy.</title>
        <authorList>
            <person name="Falace A."/>
            <person name="Filipello F."/>
            <person name="La Padula V."/>
            <person name="Vanni N."/>
            <person name="Madia F."/>
            <person name="De Pietri Tonelli D."/>
            <person name="de Falco F.A."/>
            <person name="Striano P."/>
            <person name="Dagna Bricarelli F."/>
            <person name="Minetti C."/>
            <person name="Benfenati F."/>
            <person name="Fassio A."/>
            <person name="Zara F."/>
        </authorList>
    </citation>
    <scope>INTERACTION WITH TBC1D24</scope>
</reference>
<reference key="25">
    <citation type="journal article" date="2010" name="J. Biol. Chem.">
        <title>AIP1 functions as Arf6-GAP to negatively regulate TLR4 signaling.</title>
        <authorList>
            <person name="Wan T."/>
            <person name="Liu T."/>
            <person name="Zhang H."/>
            <person name="Tang S."/>
            <person name="Min W."/>
        </authorList>
    </citation>
    <scope>SUBCELLULAR LOCATION</scope>
</reference>
<reference key="26">
    <citation type="journal article" date="2010" name="J. Biol. Chem.">
        <title>A protein interaction network for Ecm29 links the 26 S proteasome to molecular motors and endosomal components.</title>
        <authorList>
            <person name="Gorbea C."/>
            <person name="Pratt G."/>
            <person name="Ustrell V."/>
            <person name="Bell R."/>
            <person name="Sahasrabudhe S."/>
            <person name="Hughes R.E."/>
            <person name="Rechsteiner M."/>
        </authorList>
    </citation>
    <scope>SUBCELLULAR LOCATION</scope>
    <scope>INTERACTION WITH ECPAS</scope>
</reference>
<reference key="27">
    <citation type="journal article" date="2011" name="BMC Syst. Biol.">
        <title>Initial characterization of the human central proteome.</title>
        <authorList>
            <person name="Burkard T.R."/>
            <person name="Planyavsky M."/>
            <person name="Kaupe I."/>
            <person name="Breitwieser F.P."/>
            <person name="Buerckstuemmer T."/>
            <person name="Bennett K.L."/>
            <person name="Superti-Furga G."/>
            <person name="Colinge J."/>
        </authorList>
    </citation>
    <scope>IDENTIFICATION BY MASS SPECTROMETRY [LARGE SCALE ANALYSIS]</scope>
</reference>
<reference key="28">
    <citation type="journal article" date="2012" name="Traffic">
        <title>MICAL-L1 is a tubular endosomal membrane hub that connects Rab35 and Arf6 with Rab8a.</title>
        <authorList>
            <person name="Rahajeng J."/>
            <person name="Giridharan S.S."/>
            <person name="Cai B."/>
            <person name="Naslavsky N."/>
            <person name="Caplan S."/>
        </authorList>
    </citation>
    <scope>INTERACTION WITH MICALL1</scope>
    <scope>SUBCELLULAR LOCATION</scope>
</reference>
<reference key="29">
    <citation type="journal article" date="2013" name="FEBS Lett.">
        <title>EFA6 activates Arf6 and participates in its targeting to the Flemming body during cytokinesis.</title>
        <authorList>
            <person name="Ueda T."/>
            <person name="Hanai A."/>
            <person name="Takei T."/>
            <person name="Kubo K."/>
            <person name="Ohgi M."/>
            <person name="Sakagami H."/>
            <person name="Takahashi S."/>
            <person name="Shin H.W."/>
            <person name="Nakayama K."/>
        </authorList>
    </citation>
    <scope>SUBCELLULAR LOCATION</scope>
</reference>
<reference key="30">
    <citation type="journal article" date="2014" name="J. Proteomics">
        <title>An enzyme assisted RP-RPLC approach for in-depth analysis of human liver phosphoproteome.</title>
        <authorList>
            <person name="Bian Y."/>
            <person name="Song C."/>
            <person name="Cheng K."/>
            <person name="Dong M."/>
            <person name="Wang F."/>
            <person name="Huang J."/>
            <person name="Sun D."/>
            <person name="Wang L."/>
            <person name="Ye M."/>
            <person name="Zou H."/>
        </authorList>
    </citation>
    <scope>IDENTIFICATION BY MASS SPECTROMETRY [LARGE SCALE ANALYSIS]</scope>
    <source>
        <tissue>Liver</tissue>
    </source>
</reference>
<reference key="31">
    <citation type="journal article" date="2014" name="Nat. Commun.">
        <title>Global profiling of co- and post-translationally N-myristoylated proteomes in human cells.</title>
        <authorList>
            <person name="Thinon E."/>
            <person name="Serwa R.A."/>
            <person name="Broncel M."/>
            <person name="Brannigan J.A."/>
            <person name="Brassat U."/>
            <person name="Wright M.H."/>
            <person name="Heal W.P."/>
            <person name="Wilkinson A.J."/>
            <person name="Mann D.J."/>
            <person name="Tate E.W."/>
        </authorList>
    </citation>
    <scope>MYRISTOYLATION AT GLY-2</scope>
    <scope>CLEAVAGE OF INITIATOR METHIONINE</scope>
    <scope>IDENTIFICATION BY MASS SPECTROMETRY</scope>
</reference>
<reference key="32">
    <citation type="journal article" date="2015" name="Proteomics">
        <title>N-terminome analysis of the human mitochondrial proteome.</title>
        <authorList>
            <person name="Vaca Jacome A.S."/>
            <person name="Rabilloud T."/>
            <person name="Schaeffer-Reiss C."/>
            <person name="Rompais M."/>
            <person name="Ayoub D."/>
            <person name="Lane L."/>
            <person name="Bairoch A."/>
            <person name="Van Dorsselaer A."/>
            <person name="Carapito C."/>
        </authorList>
    </citation>
    <scope>IDENTIFICATION BY MASS SPECTROMETRY [LARGE SCALE ANALYSIS]</scope>
</reference>
<reference key="33">
    <citation type="journal article" date="2020" name="Nat. Commun.">
        <title>NMT1 and NMT2 are lysine myristoyltransferases regulating the ARF6 GTPase cycle.</title>
        <authorList>
            <person name="Kosciuk T."/>
            <person name="Price I.R."/>
            <person name="Zhang X."/>
            <person name="Zhu C."/>
            <person name="Johnson K.N."/>
            <person name="Zhang S."/>
            <person name="Halaby S.L."/>
            <person name="Komaniecki G.P."/>
            <person name="Yang M."/>
            <person name="DeHart C.J."/>
            <person name="Thomas P.M."/>
            <person name="Kelleher N.L."/>
            <person name="Fromme J.C."/>
            <person name="Lin H."/>
        </authorList>
    </citation>
    <scope>FUNCTION</scope>
    <scope>CATALYTIC ACTIVITY</scope>
    <scope>SUBCELLULAR LOCATION</scope>
    <scope>MYRISTOYLATION AT LYS-3</scope>
    <scope>MUTAGENESIS OF LYS-3; THR-27 AND GLN-67</scope>
</reference>
<reference key="34">
    <citation type="journal article" date="2022" name="J. Cell Sci.">
        <title>AMPK promotes Arf6 activation in a kinase-independent manner upon glucose starvation.</title>
        <authorList>
            <person name="Chen K.J."/>
            <person name="Hsu J.W."/>
            <person name="Lee F.S."/>
        </authorList>
    </citation>
    <scope>FUNCTION</scope>
    <scope>ACTIVITY REGULATION</scope>
    <scope>SUBCELLULAR LOCATION</scope>
    <scope>INTERACTION WITH PRKAA2</scope>
</reference>
<reference key="35">
    <citation type="journal article" date="2022" name="FASEB J.">
        <title>Insulin stimulates atypical protein kinase C-mediated phosphorylation of the neuronal adaptor FE65 to potentiate neurite outgrowth by activating ARF6-Rac1 signaling.</title>
        <authorList>
            <person name="Chau D.D."/>
            <person name="Li W."/>
            <person name="Chan W.W.R."/>
            <person name="Sun J.K."/>
            <person name="Zhai Y."/>
            <person name="Chow H.M."/>
            <person name="Lau K.F."/>
        </authorList>
    </citation>
    <scope>FUNCTION</scope>
    <scope>INTERACTION WITH APBB1</scope>
</reference>
<reference key="36">
    <citation type="journal article" date="2023" name="J. Med. Virol.">
        <title>Enterovirus 71 enters human brain microvascular endothelial cells through an ARF6-mediated endocytic pathway.</title>
        <authorList>
            <person name="Zhu Y."/>
            <person name="Wang X."/>
            <person name="He Z."/>
            <person name="Zhao P."/>
            <person name="Ren H."/>
            <person name="Qi Z."/>
        </authorList>
    </citation>
    <scope>FUNCTION (MICROBIAL INFECTION)</scope>
    <scope>INTERACTION WITH ENTEROVIRUS 71 PROTEIN VP1 (MICROBIAL INFECTION)</scope>
    <scope>SUBCELLULAR LOCATION</scope>
</reference>
<reference key="37">
    <citation type="journal article" date="2023" name="J. Cell Sci.">
        <title>ARF6 plays a general role in targeting palmitoylated proteins from golgi to the plasma membrane.</title>
        <authorList>
            <person name="Wang J."/>
            <person name="Zheng L.F."/>
            <person name="Ren S."/>
            <person name="Li D.L."/>
            <person name="Chen C."/>
            <person name="Sun H.H."/>
            <person name="Liu L.Y."/>
            <person name="Guo H."/>
            <person name="Zhao T.J."/>
        </authorList>
    </citation>
    <scope>FUNCTION</scope>
    <scope>SUBCELLULAR LOCATION</scope>
    <scope>INTERACTION WITH CD36</scope>
</reference>
<reference key="38">
    <citation type="journal article" date="2000" name="Nat. Struct. Biol.">
        <title>Structure of Arf6-GDP suggests a basis for guanine nucleotide exchange factors specificity.</title>
        <authorList>
            <person name="Menetrey J."/>
            <person name="Macia E."/>
            <person name="Pasqualato S."/>
            <person name="Franco M."/>
            <person name="Cherfils J."/>
        </authorList>
    </citation>
    <scope>X-RAY CRYSTALLOGRAPHY (2.28 ANGSTROMS) IN COMPLEX WITH GDP</scope>
</reference>
<reference key="39">
    <citation type="journal article" date="2001" name="EMBO Rep.">
        <title>The structural GDP/GTP cycle of human Arf6.</title>
        <authorList>
            <person name="Pasqualato S."/>
            <person name="Menetrey J."/>
            <person name="Franco M."/>
            <person name="Cherfils J."/>
        </authorList>
    </citation>
    <scope>X-RAY CRYSTALLOGRAPHY (2.8 ANGSTROMS) IN COMPLEX WITH GTP ANALOG</scope>
    <scope>FUNCTION</scope>
</reference>
<reference key="40">
    <citation type="journal article" date="2005" name="Science">
        <title>Structural basis for the activation of cholera toxin by human ARF6-GTP.</title>
        <authorList>
            <person name="O'Neal C.J."/>
            <person name="Jobling M.G."/>
            <person name="Holmes R.K."/>
            <person name="Hol W.G."/>
        </authorList>
    </citation>
    <scope>X-RAY CRYSTALLOGRAPHY (1.80 ANGSTROMS) IN COMPLEX WITH GTP AND V.CHOLERAE ENTEROTOXIN SUBUNIT A1</scope>
    <scope>SUBUNIT</scope>
    <scope>FUNCTION (MICROBIAL INFECTION)</scope>
</reference>
<reference key="41">
    <citation type="journal article" date="2006" name="FEBS Lett.">
        <title>NMR structural studies of the myristoylated N-terminus of ADP ribosylation factor 6 (Arf6).</title>
        <authorList>
            <person name="Gizachew D."/>
            <person name="Oswald R."/>
        </authorList>
    </citation>
    <scope>STRUCTURE BY NMR OF 2-11</scope>
</reference>
<reference key="42">
    <citation type="journal article" date="2009" name="EMBO J.">
        <title>The structural basis of Arf effector specificity: the crystal structure of ARF6 in a complex with JIP4.</title>
        <authorList>
            <person name="Isabet T."/>
            <person name="Montagnac G."/>
            <person name="Regazzoni K."/>
            <person name="Raynal B."/>
            <person name="El Khadali F."/>
            <person name="England P."/>
            <person name="Franco M."/>
            <person name="Chavrier P."/>
            <person name="Houdusse A."/>
            <person name="Menetrey J."/>
        </authorList>
    </citation>
    <scope>X-RAY CRYSTALLOGRAPHY (1.93 ANGSTROMS) OF 13-175 IN COMPLEX WITH GTP AND SPAG9</scope>
    <scope>INTERACTION WITH SPAG9</scope>
</reference>
<reference key="43">
    <citation type="journal article" date="2010" name="Cell">
        <title>The structure of an Arf-ArfGAP complex reveals a Ca2+ regulatory mechanism.</title>
        <authorList>
            <person name="Ismail S.A."/>
            <person name="Vetter I.R."/>
            <person name="Sot B."/>
            <person name="Wittinghofer A."/>
        </authorList>
    </citation>
    <scope>X-RAY CRYSTALLOGRAPHY (3.38 ANGSTROMS) OF 11-175 IN COMPLEX WITH GDP ASAP3 AND CALCIUM IONS</scope>
    <scope>INTERACTION WITH ASAP3</scope>
</reference>
<reference key="44">
    <citation type="journal article" date="2011" name="Nature">
        <title>The assembly of a GTPase-kinase signalling complex by a bacterial catalytic scaffold.</title>
        <authorList>
            <person name="Selyunin A.S."/>
            <person name="Sutton S.E."/>
            <person name="Weigele B.A."/>
            <person name="Reddick L.E."/>
            <person name="Orchard R.C."/>
            <person name="Bresson S.M."/>
            <person name="Tomchick D.R."/>
            <person name="Alto N.M."/>
        </authorList>
    </citation>
    <scope>X-RAY CRYSTALLOGRAPHY (2.50 ANGSTROMS) OF 14-175 IN COMPLEX WITH GTP AND E.COLI ESPG</scope>
    <scope>FUNCTION</scope>
    <scope>SUBUNIT</scope>
</reference>
<reference key="45">
    <citation type="journal article" date="2012" name="Cell">
        <title>Structurally distinct bacterial TBC-like GAPs link Arf GTPase to Rab1 inactivation to counteract host defenses.</title>
        <authorList>
            <person name="Dong N."/>
            <person name="Zhu Y."/>
            <person name="Lu Q."/>
            <person name="Hu L."/>
            <person name="Zheng Y."/>
            <person name="Shao F."/>
        </authorList>
    </citation>
    <scope>X-RAY CRYSTALLOGRAPHY (4.10 ANGSTROMS) OF 14-173 IN COMPLEX WITH GTP; RAB1A AND E.COLI ESPG</scope>
    <scope>SUBUNIT</scope>
</reference>
<reference key="46">
    <citation type="journal article" date="2013" name="Proc. Natl. Acad. Sci. U.S.A.">
        <title>Structural basis for membrane recruitment and allosteric activation of cytohesin family Arf GTPase exchange factors.</title>
        <authorList>
            <person name="Malaby A.W."/>
            <person name="van den Berg B."/>
            <person name="Lambright D.G."/>
        </authorList>
    </citation>
    <scope>X-RAY CRYSTALLOGRAPHY (1.85 ANGSTROMS) OF 14-173 IN COMPLEX WITH CYTH3 AND GTP</scope>
    <scope>SUBUNIT</scope>
</reference>
<sequence>MGKVLSKIFGNKEMRILMLGLDAAGKTTILYKLKLGQSVTTIPTVGFNVETVTYKNVKFNVWDVGGQDKIRPLWRHYYTGTQGLIFVVDCADRDRIDEARQELHRIINDREMRDAIILIFANKQDLPDAMKPHEIQEKLGLTRIRDRNWYVQPSCATSGDGLYEGLTWLTSNYKS</sequence>
<protein>
    <recommendedName>
        <fullName evidence="37">ADP-ribosylation factor 6</fullName>
        <ecNumber evidence="31">3.6.5.2</ecNumber>
    </recommendedName>
</protein>
<name>ARF6_HUMAN</name>